<protein>
    <recommendedName>
        <fullName>Uncharacterized protein RP470</fullName>
    </recommendedName>
</protein>
<sequence>MEVFMVGTALLKLIAVIDSKHMMLYDALGIKITTNKPLKLTLDLEEHHHHREKRQSLYQNKSTPGSLFEPHTSLKDIEHKEAARSVIKHLEKVTTANQAKYKELIIIAEPKMLGCVRQELTSGLKKIVTKEIAKDLVQHNVDAVERAVFA</sequence>
<keyword id="KW-1185">Reference proteome</keyword>
<gene>
    <name type="ordered locus">RP470</name>
</gene>
<feature type="chain" id="PRO_0000101376" description="Uncharacterized protein RP470">
    <location>
        <begin position="1"/>
        <end position="150"/>
    </location>
</feature>
<proteinExistence type="predicted"/>
<accession>Q9ZD74</accession>
<name>Y470_RICPR</name>
<reference key="1">
    <citation type="journal article" date="1998" name="Nature">
        <title>The genome sequence of Rickettsia prowazekii and the origin of mitochondria.</title>
        <authorList>
            <person name="Andersson S.G.E."/>
            <person name="Zomorodipour A."/>
            <person name="Andersson J.O."/>
            <person name="Sicheritz-Ponten T."/>
            <person name="Alsmark U.C.M."/>
            <person name="Podowski R.M."/>
            <person name="Naeslund A.K."/>
            <person name="Eriksson A.-S."/>
            <person name="Winkler H.H."/>
            <person name="Kurland C.G."/>
        </authorList>
    </citation>
    <scope>NUCLEOTIDE SEQUENCE [LARGE SCALE GENOMIC DNA]</scope>
    <source>
        <strain>Madrid E</strain>
    </source>
</reference>
<dbReference type="EMBL" id="AJ235271">
    <property type="protein sequence ID" value="CAA14925.1"/>
    <property type="molecule type" value="Genomic_DNA"/>
</dbReference>
<dbReference type="PIR" id="C71706">
    <property type="entry name" value="C71706"/>
</dbReference>
<dbReference type="RefSeq" id="NP_220849.1">
    <property type="nucleotide sequence ID" value="NC_000963.1"/>
</dbReference>
<dbReference type="SMR" id="Q9ZD74"/>
<dbReference type="STRING" id="272947.gene:17555550"/>
<dbReference type="EnsemblBacteria" id="CAA14925">
    <property type="protein sequence ID" value="CAA14925"/>
    <property type="gene ID" value="CAA14925"/>
</dbReference>
<dbReference type="KEGG" id="rpr:RP470"/>
<dbReference type="PATRIC" id="fig|272947.5.peg.481"/>
<dbReference type="eggNOG" id="COG5622">
    <property type="taxonomic scope" value="Bacteria"/>
</dbReference>
<dbReference type="HOGENOM" id="CLU_1775991_0_0_5"/>
<dbReference type="OrthoDB" id="9812459at2"/>
<dbReference type="Proteomes" id="UP000002480">
    <property type="component" value="Chromosome"/>
</dbReference>
<dbReference type="InterPro" id="IPR019291">
    <property type="entry name" value="Host_attachment_protein"/>
</dbReference>
<dbReference type="Pfam" id="PF10116">
    <property type="entry name" value="Host_attach"/>
    <property type="match status" value="1"/>
</dbReference>
<organism>
    <name type="scientific">Rickettsia prowazekii (strain Madrid E)</name>
    <dbReference type="NCBI Taxonomy" id="272947"/>
    <lineage>
        <taxon>Bacteria</taxon>
        <taxon>Pseudomonadati</taxon>
        <taxon>Pseudomonadota</taxon>
        <taxon>Alphaproteobacteria</taxon>
        <taxon>Rickettsiales</taxon>
        <taxon>Rickettsiaceae</taxon>
        <taxon>Rickettsieae</taxon>
        <taxon>Rickettsia</taxon>
        <taxon>typhus group</taxon>
    </lineage>
</organism>